<dbReference type="EC" id="1.1.1.262" evidence="1"/>
<dbReference type="EMBL" id="AE005174">
    <property type="protein sequence ID" value="AAG54357.1"/>
    <property type="molecule type" value="Genomic_DNA"/>
</dbReference>
<dbReference type="EMBL" id="BA000007">
    <property type="protein sequence ID" value="BAB33480.1"/>
    <property type="molecule type" value="Genomic_DNA"/>
</dbReference>
<dbReference type="PIR" id="A85487">
    <property type="entry name" value="A85487"/>
</dbReference>
<dbReference type="PIR" id="A90636">
    <property type="entry name" value="A90636"/>
</dbReference>
<dbReference type="RefSeq" id="NP_308084.1">
    <property type="nucleotide sequence ID" value="NC_002695.1"/>
</dbReference>
<dbReference type="RefSeq" id="WP_000241259.1">
    <property type="nucleotide sequence ID" value="NZ_VOAI01000002.1"/>
</dbReference>
<dbReference type="SMR" id="P58713"/>
<dbReference type="STRING" id="155864.Z0061"/>
<dbReference type="GeneID" id="913457"/>
<dbReference type="KEGG" id="ece:Z0061"/>
<dbReference type="KEGG" id="ecs:ECs_0057"/>
<dbReference type="PATRIC" id="fig|386585.9.peg.156"/>
<dbReference type="eggNOG" id="COG1995">
    <property type="taxonomic scope" value="Bacteria"/>
</dbReference>
<dbReference type="HOGENOM" id="CLU_040168_1_0_6"/>
<dbReference type="OMA" id="FDIAYQN"/>
<dbReference type="UniPathway" id="UPA00244">
    <property type="reaction ID" value="UER00312"/>
</dbReference>
<dbReference type="Proteomes" id="UP000000558">
    <property type="component" value="Chromosome"/>
</dbReference>
<dbReference type="Proteomes" id="UP000002519">
    <property type="component" value="Chromosome"/>
</dbReference>
<dbReference type="GO" id="GO:0005737">
    <property type="term" value="C:cytoplasm"/>
    <property type="evidence" value="ECO:0007669"/>
    <property type="project" value="UniProtKB-SubCell"/>
</dbReference>
<dbReference type="GO" id="GO:0050570">
    <property type="term" value="F:4-hydroxythreonine-4-phosphate dehydrogenase activity"/>
    <property type="evidence" value="ECO:0007669"/>
    <property type="project" value="UniProtKB-UniRule"/>
</dbReference>
<dbReference type="GO" id="GO:0050897">
    <property type="term" value="F:cobalt ion binding"/>
    <property type="evidence" value="ECO:0007669"/>
    <property type="project" value="UniProtKB-UniRule"/>
</dbReference>
<dbReference type="GO" id="GO:0000287">
    <property type="term" value="F:magnesium ion binding"/>
    <property type="evidence" value="ECO:0007669"/>
    <property type="project" value="UniProtKB-UniRule"/>
</dbReference>
<dbReference type="GO" id="GO:0051287">
    <property type="term" value="F:NAD binding"/>
    <property type="evidence" value="ECO:0007669"/>
    <property type="project" value="InterPro"/>
</dbReference>
<dbReference type="GO" id="GO:0008270">
    <property type="term" value="F:zinc ion binding"/>
    <property type="evidence" value="ECO:0007669"/>
    <property type="project" value="UniProtKB-UniRule"/>
</dbReference>
<dbReference type="GO" id="GO:0042823">
    <property type="term" value="P:pyridoxal phosphate biosynthetic process"/>
    <property type="evidence" value="ECO:0007669"/>
    <property type="project" value="UniProtKB-UniRule"/>
</dbReference>
<dbReference type="GO" id="GO:0008615">
    <property type="term" value="P:pyridoxine biosynthetic process"/>
    <property type="evidence" value="ECO:0007669"/>
    <property type="project" value="UniProtKB-UniRule"/>
</dbReference>
<dbReference type="FunFam" id="3.40.718.10:FF:000010">
    <property type="entry name" value="4-hydroxythreonine-4-phosphate dehydrogenase"/>
    <property type="match status" value="1"/>
</dbReference>
<dbReference type="Gene3D" id="3.40.718.10">
    <property type="entry name" value="Isopropylmalate Dehydrogenase"/>
    <property type="match status" value="1"/>
</dbReference>
<dbReference type="HAMAP" id="MF_00536">
    <property type="entry name" value="PdxA"/>
    <property type="match status" value="1"/>
</dbReference>
<dbReference type="InterPro" id="IPR037510">
    <property type="entry name" value="PdxA"/>
</dbReference>
<dbReference type="InterPro" id="IPR005255">
    <property type="entry name" value="PdxA_fam"/>
</dbReference>
<dbReference type="NCBIfam" id="TIGR00557">
    <property type="entry name" value="pdxA"/>
    <property type="match status" value="1"/>
</dbReference>
<dbReference type="PANTHER" id="PTHR30004">
    <property type="entry name" value="4-HYDROXYTHREONINE-4-PHOSPHATE DEHYDROGENASE"/>
    <property type="match status" value="1"/>
</dbReference>
<dbReference type="PANTHER" id="PTHR30004:SF5">
    <property type="entry name" value="4-HYDROXYTHREONINE-4-PHOSPHATE DEHYDROGENASE"/>
    <property type="match status" value="1"/>
</dbReference>
<dbReference type="Pfam" id="PF04166">
    <property type="entry name" value="PdxA"/>
    <property type="match status" value="1"/>
</dbReference>
<dbReference type="SUPFAM" id="SSF53659">
    <property type="entry name" value="Isocitrate/Isopropylmalate dehydrogenase-like"/>
    <property type="match status" value="1"/>
</dbReference>
<protein>
    <recommendedName>
        <fullName evidence="1">4-hydroxythreonine-4-phosphate dehydrogenase</fullName>
        <ecNumber evidence="1">1.1.1.262</ecNumber>
    </recommendedName>
    <alternativeName>
        <fullName evidence="1">4-(phosphohydroxy)-L-threonine dehydrogenase</fullName>
    </alternativeName>
</protein>
<reference key="1">
    <citation type="journal article" date="2001" name="Nature">
        <title>Genome sequence of enterohaemorrhagic Escherichia coli O157:H7.</title>
        <authorList>
            <person name="Perna N.T."/>
            <person name="Plunkett G. III"/>
            <person name="Burland V."/>
            <person name="Mau B."/>
            <person name="Glasner J.D."/>
            <person name="Rose D.J."/>
            <person name="Mayhew G.F."/>
            <person name="Evans P.S."/>
            <person name="Gregor J."/>
            <person name="Kirkpatrick H.A."/>
            <person name="Posfai G."/>
            <person name="Hackett J."/>
            <person name="Klink S."/>
            <person name="Boutin A."/>
            <person name="Shao Y."/>
            <person name="Miller L."/>
            <person name="Grotbeck E.J."/>
            <person name="Davis N.W."/>
            <person name="Lim A."/>
            <person name="Dimalanta E.T."/>
            <person name="Potamousis K."/>
            <person name="Apodaca J."/>
            <person name="Anantharaman T.S."/>
            <person name="Lin J."/>
            <person name="Yen G."/>
            <person name="Schwartz D.C."/>
            <person name="Welch R.A."/>
            <person name="Blattner F.R."/>
        </authorList>
    </citation>
    <scope>NUCLEOTIDE SEQUENCE [LARGE SCALE GENOMIC DNA]</scope>
    <source>
        <strain>O157:H7 / EDL933 / ATCC 700927 / EHEC</strain>
    </source>
</reference>
<reference key="2">
    <citation type="journal article" date="2001" name="DNA Res.">
        <title>Complete genome sequence of enterohemorrhagic Escherichia coli O157:H7 and genomic comparison with a laboratory strain K-12.</title>
        <authorList>
            <person name="Hayashi T."/>
            <person name="Makino K."/>
            <person name="Ohnishi M."/>
            <person name="Kurokawa K."/>
            <person name="Ishii K."/>
            <person name="Yokoyama K."/>
            <person name="Han C.-G."/>
            <person name="Ohtsubo E."/>
            <person name="Nakayama K."/>
            <person name="Murata T."/>
            <person name="Tanaka M."/>
            <person name="Tobe T."/>
            <person name="Iida T."/>
            <person name="Takami H."/>
            <person name="Honda T."/>
            <person name="Sasakawa C."/>
            <person name="Ogasawara N."/>
            <person name="Yasunaga T."/>
            <person name="Kuhara S."/>
            <person name="Shiba T."/>
            <person name="Hattori M."/>
            <person name="Shinagawa H."/>
        </authorList>
    </citation>
    <scope>NUCLEOTIDE SEQUENCE [LARGE SCALE GENOMIC DNA]</scope>
    <source>
        <strain>O157:H7 / Sakai / RIMD 0509952 / EHEC</strain>
    </source>
</reference>
<gene>
    <name evidence="1" type="primary">pdxA</name>
    <name type="ordered locus">Z0061</name>
    <name type="ordered locus">ECs0057</name>
</gene>
<proteinExistence type="inferred from homology"/>
<sequence length="329" mass="35209">MVKTQRVVITPGEPAGIGPDLVVQLAQREWPVELVVCADATLLTDRAAMLGLPLTLRPYSPNSPAQPQTTGTLTLLPVALRESVTAGQLAIENGHYVVETLARACDGCLNGEFAALITGPVHKGVINDAGIPFTGHTEFFEERSQAKKVVMMLATEELRVALATTHLPLRDIADAITPALLHEVIAILHHDLRTKFGIAEPRILVCGLNPHAGEGGHMGTEEIDTIIPVLDELRAQGMKLNGPLPADTLFQPKYLDNADAVLAMYHDQGLPVLKYQGFGRGVNITLGLPFIRTSVDHGTALELAGRGEADVGSFITALNLAIKMIVNTQ</sequence>
<comment type="function">
    <text evidence="1">Catalyzes the NAD(P)-dependent oxidation of 4-(phosphooxy)-L-threonine (HTP) into 2-amino-3-oxo-4-(phosphooxy)butyric acid which spontaneously decarboxylates to form 3-amino-2-oxopropyl phosphate (AHAP).</text>
</comment>
<comment type="catalytic activity">
    <reaction evidence="1">
        <text>4-(phosphooxy)-L-threonine + NAD(+) = 3-amino-2-oxopropyl phosphate + CO2 + NADH</text>
        <dbReference type="Rhea" id="RHEA:32275"/>
        <dbReference type="ChEBI" id="CHEBI:16526"/>
        <dbReference type="ChEBI" id="CHEBI:57279"/>
        <dbReference type="ChEBI" id="CHEBI:57540"/>
        <dbReference type="ChEBI" id="CHEBI:57945"/>
        <dbReference type="ChEBI" id="CHEBI:58452"/>
        <dbReference type="EC" id="1.1.1.262"/>
    </reaction>
</comment>
<comment type="cofactor">
    <cofactor evidence="1">
        <name>Zn(2+)</name>
        <dbReference type="ChEBI" id="CHEBI:29105"/>
    </cofactor>
    <cofactor evidence="1">
        <name>Mg(2+)</name>
        <dbReference type="ChEBI" id="CHEBI:18420"/>
    </cofactor>
    <cofactor evidence="1">
        <name>Co(2+)</name>
        <dbReference type="ChEBI" id="CHEBI:48828"/>
    </cofactor>
    <text evidence="1">Binds 1 divalent metal cation per subunit. Can use ions such as Zn(2+), Mg(2+) or Co(2+).</text>
</comment>
<comment type="pathway">
    <text evidence="1">Cofactor biosynthesis; pyridoxine 5'-phosphate biosynthesis; pyridoxine 5'-phosphate from D-erythrose 4-phosphate: step 4/5.</text>
</comment>
<comment type="subunit">
    <text evidence="1">Homodimer.</text>
</comment>
<comment type="subcellular location">
    <subcellularLocation>
        <location evidence="1">Cytoplasm</location>
    </subcellularLocation>
</comment>
<comment type="miscellaneous">
    <text evidence="1">The active site is located at the dimer interface.</text>
</comment>
<comment type="similarity">
    <text evidence="1">Belongs to the PdxA family.</text>
</comment>
<accession>P58713</accession>
<feature type="chain" id="PRO_0000188806" description="4-hydroxythreonine-4-phosphate dehydrogenase">
    <location>
        <begin position="1"/>
        <end position="329"/>
    </location>
</feature>
<feature type="binding site" evidence="1">
    <location>
        <position position="136"/>
    </location>
    <ligand>
        <name>substrate</name>
    </ligand>
</feature>
<feature type="binding site" evidence="1">
    <location>
        <position position="137"/>
    </location>
    <ligand>
        <name>substrate</name>
    </ligand>
</feature>
<feature type="binding site" evidence="1">
    <location>
        <position position="166"/>
    </location>
    <ligand>
        <name>a divalent metal cation</name>
        <dbReference type="ChEBI" id="CHEBI:60240"/>
        <note>ligand shared between dimeric partners</note>
    </ligand>
</feature>
<feature type="binding site" evidence="1">
    <location>
        <position position="211"/>
    </location>
    <ligand>
        <name>a divalent metal cation</name>
        <dbReference type="ChEBI" id="CHEBI:60240"/>
        <note>ligand shared between dimeric partners</note>
    </ligand>
</feature>
<feature type="binding site" evidence="1">
    <location>
        <position position="266"/>
    </location>
    <ligand>
        <name>a divalent metal cation</name>
        <dbReference type="ChEBI" id="CHEBI:60240"/>
        <note>ligand shared between dimeric partners</note>
    </ligand>
</feature>
<feature type="binding site" evidence="1">
    <location>
        <position position="274"/>
    </location>
    <ligand>
        <name>substrate</name>
    </ligand>
</feature>
<feature type="binding site" evidence="1">
    <location>
        <position position="283"/>
    </location>
    <ligand>
        <name>substrate</name>
    </ligand>
</feature>
<feature type="binding site" evidence="1">
    <location>
        <position position="292"/>
    </location>
    <ligand>
        <name>substrate</name>
    </ligand>
</feature>
<name>PDXA_ECO57</name>
<evidence type="ECO:0000255" key="1">
    <source>
        <dbReference type="HAMAP-Rule" id="MF_00536"/>
    </source>
</evidence>
<organism>
    <name type="scientific">Escherichia coli O157:H7</name>
    <dbReference type="NCBI Taxonomy" id="83334"/>
    <lineage>
        <taxon>Bacteria</taxon>
        <taxon>Pseudomonadati</taxon>
        <taxon>Pseudomonadota</taxon>
        <taxon>Gammaproteobacteria</taxon>
        <taxon>Enterobacterales</taxon>
        <taxon>Enterobacteriaceae</taxon>
        <taxon>Escherichia</taxon>
    </lineage>
</organism>
<keyword id="KW-0170">Cobalt</keyword>
<keyword id="KW-0963">Cytoplasm</keyword>
<keyword id="KW-0460">Magnesium</keyword>
<keyword id="KW-0479">Metal-binding</keyword>
<keyword id="KW-0520">NAD</keyword>
<keyword id="KW-0521">NADP</keyword>
<keyword id="KW-0560">Oxidoreductase</keyword>
<keyword id="KW-0664">Pyridoxine biosynthesis</keyword>
<keyword id="KW-1185">Reference proteome</keyword>
<keyword id="KW-0862">Zinc</keyword>